<comment type="function">
    <text evidence="2 6 7 10 11 13">Self-ligand receptor of the signaling lymphocytic activation molecule (SLAM) family. SLAM receptors triggered by homo- or heterotypic cell-cell interactions are modulating the activation and differentiation of a wide variety of immune cells and thus are involved in the regulation and interconnection of both innate and adaptive immune response. Activities are controlled by presence or absence of small cytoplasmic adapter proteins, SH2D1A/SAP and/or SH2D1B/EAT-2. Isoform 1 mediates NK cell activation through a SH2D1A-independent extracellular signal-regulated ERK-mediated pathway (PubMed:11698418). Positively regulates NK cell functions by a mechanism dependent on phosphorylated SH2D1B. Downstream signaling implicates PLCG1, PLCG2 and PI3K (PubMed:16339536). In addition to heterotypic NK cells-target cells interactions also homotypic interactions between NK cells may contribute to activation. However, in the absence of SH2D1B, inhibits NK cell function. Also acts inhibitory in T-cells (By similarity). May play a role in lymphocyte adhesion (PubMed:11802771). In LPS-activated monocytes negatively regulates production of pro-inflammatory cytokines (PubMed:23695528).</text>
</comment>
<comment type="function">
    <text>Isoform 3 does not mediate any NK cell activation.</text>
</comment>
<comment type="subunit">
    <text evidence="2 8 10">Isoform 1 binds to SH2D1A when its cytoplasmic tail is phosphorylated in the presence of FYN (in vitro); low affinity binding, the physiological relevance of the interaction is questioned. Interacts with SH2D1B; in NK cells (PubMed:16339536). Interacts (via ITSM phosphorylated on Tyr-302) with SH2D1B, PTPN6/SHP-1, PTPN11/SHP-2, INPP5D/SHIP1, CSK and FYN (By similarity).</text>
</comment>
<comment type="interaction">
    <interactant intactId="EBI-3916159">
        <id>Q9NQ25</id>
    </interactant>
    <interactant intactId="EBI-3916159">
        <id>Q9NQ25</id>
        <label>SLAMF7</label>
    </interactant>
    <organismsDiffer>false</organismsDiffer>
    <experiments>2</experiments>
</comment>
<comment type="subcellular location">
    <subcellularLocation>
        <location>Membrane</location>
        <topology>Single-pass type I membrane protein</topology>
    </subcellularLocation>
</comment>
<comment type="alternative products">
    <event type="alternative splicing"/>
    <isoform>
        <id>Q9NQ25-1</id>
        <name>1</name>
        <name>19A</name>
        <name>CS1-L</name>
        <sequence type="displayed"/>
    </isoform>
    <isoform>
        <id>Q9NQ25-2</id>
        <name>2</name>
        <sequence type="described" ref="VSP_013781"/>
    </isoform>
    <isoform>
        <id>Q9NQ25-3</id>
        <name>3</name>
        <name>19A24</name>
        <name>CS1-S</name>
        <sequence type="described" ref="VSP_013782"/>
    </isoform>
    <isoform>
        <id>Q9NQ25-4</id>
        <name>4</name>
        <sequence type="described" ref="VSP_054540 VSP_054541"/>
    </isoform>
    <isoform>
        <id>Q9NQ25-5</id>
        <name>5</name>
        <sequence type="described" ref="VSP_054542"/>
    </isoform>
    <isoform>
        <id>Q9NQ25-6</id>
        <name>6</name>
        <sequence type="described" ref="VSP_055292"/>
    </isoform>
    <isoform>
        <id>Q9NQ25-7</id>
        <name>7</name>
        <sequence type="described" ref="VSP_013781 VSP_055293"/>
    </isoform>
</comment>
<comment type="tissue specificity">
    <text evidence="5 6 7 8 11">Expressed in spleen, lymph node, peripheral blood leukocytes, bone marrow, small intestine, stomach, appendix, lung and trachea. Expression was detected in NK cells, activated B-cells, NK-cell line but not in promyelocytic, B-, or T-cell lines. Expressed in monocytes. Isoform 3 is expressed at much lower level than isoform 1.</text>
</comment>
<comment type="domain">
    <text evidence="1">The ITSMs (immunoreceptor tyrosine-based switch motifs) with the consensus sequence T-X-Y-X-X-[VI] present in SLAM family receptors have overlapping specificity for activating and inhibitory SH2 domain-containing binding partners. Especially they mediate the interaction with the SH2 domain of SH2D1A and SH2D1B. A 'three-pronged' mechanism is proposed involving threonine (position -2), phosphorylated tyrosine (position 0) and valine/isoleucine (position +3).</text>
</comment>
<comment type="miscellaneous">
    <text evidence="12">Proposed to be involved in systemic lupus erythematosus (SLE) disease process.</text>
</comment>
<comment type="sequence caution" evidence="18">
    <conflict type="frameshift">
        <sequence resource="EMBL-CDS" id="CAB76561"/>
    </conflict>
</comment>
<feature type="signal peptide" evidence="9">
    <location>
        <begin position="1"/>
        <end position="22"/>
    </location>
</feature>
<feature type="chain" id="PRO_0000014963" description="SLAM family member 7">
    <location>
        <begin position="23"/>
        <end position="335"/>
    </location>
</feature>
<feature type="topological domain" description="Extracellular" evidence="3">
    <location>
        <begin position="23"/>
        <end position="226"/>
    </location>
</feature>
<feature type="transmembrane region" description="Helical" evidence="3">
    <location>
        <begin position="227"/>
        <end position="247"/>
    </location>
</feature>
<feature type="topological domain" description="Cytoplasmic" evidence="3">
    <location>
        <begin position="248"/>
        <end position="335"/>
    </location>
</feature>
<feature type="domain" description="Ig-like V-type">
    <location>
        <begin position="23"/>
        <end position="124"/>
    </location>
</feature>
<feature type="domain" description="Ig-like C2-type">
    <location>
        <begin position="131"/>
        <end position="206"/>
    </location>
</feature>
<feature type="region of interest" description="Interaction with FYN when phosphorylated at Tyr-284" evidence="2">
    <location>
        <begin position="278"/>
        <end position="296"/>
    </location>
</feature>
<feature type="short sequence motif" description="ITSM" evidence="1 2">
    <location>
        <begin position="302"/>
        <end position="307"/>
    </location>
</feature>
<feature type="glycosylation site" description="N-linked (GlcNAc...) asparagine" evidence="3">
    <location>
        <position position="98"/>
    </location>
</feature>
<feature type="glycosylation site" description="N-linked (GlcNAc...) asparagine" evidence="3">
    <location>
        <position position="142"/>
    </location>
</feature>
<feature type="glycosylation site" description="N-linked (GlcNAc...) asparagine" evidence="3">
    <location>
        <position position="148"/>
    </location>
</feature>
<feature type="glycosylation site" description="N-linked (GlcNAc...) asparagine" evidence="3">
    <location>
        <position position="172"/>
    </location>
</feature>
<feature type="glycosylation site" description="N-linked (GlcNAc...) asparagine" evidence="3">
    <location>
        <position position="176"/>
    </location>
</feature>
<feature type="glycosylation site" description="N-linked (GlcNAc...) asparagine" evidence="3">
    <location>
        <position position="204"/>
    </location>
</feature>
<feature type="disulfide bond" evidence="4">
    <location>
        <begin position="145"/>
        <end position="215"/>
    </location>
</feature>
<feature type="disulfide bond" evidence="4">
    <location>
        <begin position="151"/>
        <end position="195"/>
    </location>
</feature>
<feature type="splice variant" id="VSP_013781" description="In isoform 2 and isoform 7." evidence="15 17">
    <location>
        <begin position="19"/>
        <end position="125"/>
    </location>
</feature>
<feature type="splice variant" id="VSP_055292" description="In isoform 6." evidence="15">
    <location>
        <begin position="126"/>
        <end position="256"/>
    </location>
</feature>
<feature type="splice variant" id="VSP_054540" description="In isoform 4." evidence="15">
    <original>HLSKPKVTMGLQSNKNGTCVTNLTCCMEHGEEDVIYTWK</original>
    <variation>NNPKGRSSKYGLLHCGNTEKDGKSPLTAHDARHTKAICL</variation>
    <location>
        <begin position="127"/>
        <end position="165"/>
    </location>
</feature>
<feature type="splice variant" id="VSP_054541" description="In isoform 4." evidence="15">
    <location>
        <begin position="166"/>
        <end position="335"/>
    </location>
</feature>
<feature type="splice variant" id="VSP_055293" description="In isoform 7." evidence="15">
    <location>
        <begin position="217"/>
        <end position="256"/>
    </location>
</feature>
<feature type="splice variant" id="VSP_054542" description="In isoform 5." evidence="18">
    <original>YIEEKKRVDICRETPNICPHSGENTEYDTIPHTNRTILKEDPANTVYSTVEIPKKMENPHSLLTMPDTPRLFAYENVI</original>
    <variation>NNPKGRSSKYGLLHCGNTEKDGKSPLTAHDARHTKAICL</variation>
    <location>
        <begin position="258"/>
        <end position="335"/>
    </location>
</feature>
<feature type="splice variant" id="VSP_013782" description="In isoform 3." evidence="14 16">
    <original>YIEEKKRVDICRETPNICPHSGENTEYDTIPHTNRTILK</original>
    <variation>NNPKGRSSKYGLLHCGNTEKDGKSPLTAHDARHTKAICL</variation>
    <location>
        <begin position="258"/>
        <end position="296"/>
    </location>
</feature>
<feature type="sequence variant" id="VAR_049938" description="In dbSNP:rs35325048.">
    <original>H</original>
    <variation>Y</variation>
    <location>
        <position position="175"/>
    </location>
</feature>
<feature type="sequence variant" id="VAR_049939" description="In dbSNP:rs2295617.">
    <original>T</original>
    <variation>M</variation>
    <location>
        <position position="302"/>
    </location>
</feature>
<feature type="sequence conflict" description="In Ref. 3; CAB81950." evidence="18" ref="3">
    <original>M</original>
    <variation>L</variation>
    <location>
        <position position="135"/>
    </location>
</feature>
<keyword id="KW-1064">Adaptive immunity</keyword>
<keyword id="KW-0025">Alternative splicing</keyword>
<keyword id="KW-0903">Direct protein sequencing</keyword>
<keyword id="KW-1015">Disulfide bond</keyword>
<keyword id="KW-0325">Glycoprotein</keyword>
<keyword id="KW-0391">Immunity</keyword>
<keyword id="KW-0393">Immunoglobulin domain</keyword>
<keyword id="KW-0399">Innate immunity</keyword>
<keyword id="KW-0472">Membrane</keyword>
<keyword id="KW-1267">Proteomics identification</keyword>
<keyword id="KW-0675">Receptor</keyword>
<keyword id="KW-1185">Reference proteome</keyword>
<keyword id="KW-0732">Signal</keyword>
<keyword id="KW-0812">Transmembrane</keyword>
<keyword id="KW-1133">Transmembrane helix</keyword>
<proteinExistence type="evidence at protein level"/>
<name>SLAF7_HUMAN</name>
<protein>
    <recommendedName>
        <fullName>SLAM family member 7</fullName>
    </recommendedName>
    <alternativeName>
        <fullName>CD2 subset 1</fullName>
    </alternativeName>
    <alternativeName>
        <fullName>CD2-like receptor-activating cytotoxic cells</fullName>
        <shortName>CRACC</shortName>
    </alternativeName>
    <alternativeName>
        <fullName>Membrane protein FOAP-12</fullName>
    </alternativeName>
    <alternativeName>
        <fullName>Novel Ly9</fullName>
    </alternativeName>
    <alternativeName>
        <fullName>Protein 19A</fullName>
    </alternativeName>
    <cdAntigenName>CD319</cdAntigenName>
</protein>
<evidence type="ECO:0000250" key="1">
    <source>
        <dbReference type="UniProtKB" id="Q13291"/>
    </source>
</evidence>
<evidence type="ECO:0000250" key="2">
    <source>
        <dbReference type="UniProtKB" id="Q8BHK6"/>
    </source>
</evidence>
<evidence type="ECO:0000255" key="3"/>
<evidence type="ECO:0000255" key="4">
    <source>
        <dbReference type="PROSITE-ProRule" id="PRU00114"/>
    </source>
</evidence>
<evidence type="ECO:0000269" key="5">
    <source>
    </source>
</evidence>
<evidence type="ECO:0000269" key="6">
    <source>
    </source>
</evidence>
<evidence type="ECO:0000269" key="7">
    <source>
    </source>
</evidence>
<evidence type="ECO:0000269" key="8">
    <source>
    </source>
</evidence>
<evidence type="ECO:0000269" key="9">
    <source>
    </source>
</evidence>
<evidence type="ECO:0000269" key="10">
    <source>
    </source>
</evidence>
<evidence type="ECO:0000269" key="11">
    <source>
    </source>
</evidence>
<evidence type="ECO:0000269" key="12">
    <source>
    </source>
</evidence>
<evidence type="ECO:0000269" key="13">
    <source ref="4"/>
</evidence>
<evidence type="ECO:0000303" key="14">
    <source>
    </source>
</evidence>
<evidence type="ECO:0000303" key="15">
    <source>
    </source>
</evidence>
<evidence type="ECO:0000303" key="16">
    <source>
    </source>
</evidence>
<evidence type="ECO:0000303" key="17">
    <source>
    </source>
</evidence>
<evidence type="ECO:0000305" key="18"/>
<gene>
    <name type="primary">SLAMF7</name>
    <name type="synonym">CS1</name>
    <name type="ORF">UNQ576/PRO1138</name>
</gene>
<dbReference type="EMBL" id="AF291815">
    <property type="protein sequence ID" value="AAK11549.1"/>
    <property type="molecule type" value="mRNA"/>
</dbReference>
<dbReference type="EMBL" id="AF390894">
    <property type="protein sequence ID" value="AAL26989.1"/>
    <property type="molecule type" value="mRNA"/>
</dbReference>
<dbReference type="EMBL" id="AJ271869">
    <property type="protein sequence ID" value="CAB76561.1"/>
    <property type="status" value="ALT_FRAME"/>
    <property type="molecule type" value="mRNA"/>
</dbReference>
<dbReference type="EMBL" id="AJ276429">
    <property type="protein sequence ID" value="CAB81950.2"/>
    <property type="molecule type" value="mRNA"/>
</dbReference>
<dbReference type="EMBL" id="AB027233">
    <property type="protein sequence ID" value="BAB61022.1"/>
    <property type="molecule type" value="mRNA"/>
</dbReference>
<dbReference type="EMBL" id="AY358512">
    <property type="protein sequence ID" value="AAQ88876.1"/>
    <property type="molecule type" value="mRNA"/>
</dbReference>
<dbReference type="EMBL" id="AK290706">
    <property type="protein sequence ID" value="BAF83395.1"/>
    <property type="molecule type" value="mRNA"/>
</dbReference>
<dbReference type="EMBL" id="AK298499">
    <property type="protein sequence ID" value="BAG60706.1"/>
    <property type="molecule type" value="mRNA"/>
</dbReference>
<dbReference type="EMBL" id="AK298548">
    <property type="protein sequence ID" value="BAG60745.1"/>
    <property type="molecule type" value="mRNA"/>
</dbReference>
<dbReference type="EMBL" id="AK301438">
    <property type="protein sequence ID" value="BAG62965.1"/>
    <property type="molecule type" value="mRNA"/>
</dbReference>
<dbReference type="EMBL" id="AL834424">
    <property type="protein sequence ID" value="CAD39085.1"/>
    <property type="molecule type" value="mRNA"/>
</dbReference>
<dbReference type="EMBL" id="AL121985">
    <property type="status" value="NOT_ANNOTATED_CDS"/>
    <property type="molecule type" value="Genomic_DNA"/>
</dbReference>
<dbReference type="EMBL" id="CH471121">
    <property type="protein sequence ID" value="EAW52704.1"/>
    <property type="molecule type" value="Genomic_DNA"/>
</dbReference>
<dbReference type="EMBL" id="BC027867">
    <property type="protein sequence ID" value="AAH27867.1"/>
    <property type="molecule type" value="mRNA"/>
</dbReference>
<dbReference type="CCDS" id="CCDS1209.1">
    <molecule id="Q9NQ25-1"/>
</dbReference>
<dbReference type="CCDS" id="CCDS60321.1">
    <molecule id="Q9NQ25-5"/>
</dbReference>
<dbReference type="CCDS" id="CCDS60322.1">
    <molecule id="Q9NQ25-6"/>
</dbReference>
<dbReference type="CCDS" id="CCDS60323.1">
    <molecule id="Q9NQ25-4"/>
</dbReference>
<dbReference type="CCDS" id="CCDS60324.1">
    <molecule id="Q9NQ25-2"/>
</dbReference>
<dbReference type="CCDS" id="CCDS60325.1">
    <molecule id="Q9NQ25-7"/>
</dbReference>
<dbReference type="RefSeq" id="NP_001269517.1">
    <molecule id="Q9NQ25-4"/>
    <property type="nucleotide sequence ID" value="NM_001282588.2"/>
</dbReference>
<dbReference type="RefSeq" id="NP_001269518.1">
    <molecule id="Q9NQ25-6"/>
    <property type="nucleotide sequence ID" value="NM_001282589.2"/>
</dbReference>
<dbReference type="RefSeq" id="NP_001269519.1">
    <molecule id="Q9NQ25-2"/>
    <property type="nucleotide sequence ID" value="NM_001282590.2"/>
</dbReference>
<dbReference type="RefSeq" id="NP_001269520.1">
    <molecule id="Q9NQ25-7"/>
    <property type="nucleotide sequence ID" value="NM_001282591.2"/>
</dbReference>
<dbReference type="RefSeq" id="NP_001269521.1">
    <molecule id="Q9NQ25-5"/>
    <property type="nucleotide sequence ID" value="NM_001282592.2"/>
</dbReference>
<dbReference type="RefSeq" id="NP_001269524.1">
    <property type="nucleotide sequence ID" value="NM_001282595.1"/>
</dbReference>
<dbReference type="RefSeq" id="NP_067004.3">
    <molecule id="Q9NQ25-1"/>
    <property type="nucleotide sequence ID" value="NM_021181.4"/>
</dbReference>
<dbReference type="SMR" id="Q9NQ25"/>
<dbReference type="BioGRID" id="121782">
    <property type="interactions" value="24"/>
</dbReference>
<dbReference type="ELM" id="Q9NQ25"/>
<dbReference type="FunCoup" id="Q9NQ25">
    <property type="interactions" value="511"/>
</dbReference>
<dbReference type="IntAct" id="Q9NQ25">
    <property type="interactions" value="18"/>
</dbReference>
<dbReference type="STRING" id="9606.ENSP00000357022"/>
<dbReference type="ChEMBL" id="CHEMBL3559386"/>
<dbReference type="DrugBank" id="DB06317">
    <property type="generic name" value="Elotuzumab"/>
</dbReference>
<dbReference type="DrugCentral" id="Q9NQ25"/>
<dbReference type="GuidetoPHARMACOLOGY" id="2850"/>
<dbReference type="GlyCosmos" id="Q9NQ25">
    <property type="glycosylation" value="6 sites, No reported glycans"/>
</dbReference>
<dbReference type="GlyGen" id="Q9NQ25">
    <property type="glycosylation" value="7 sites, 1 N-linked glycan (1 site)"/>
</dbReference>
<dbReference type="iPTMnet" id="Q9NQ25"/>
<dbReference type="PhosphoSitePlus" id="Q9NQ25"/>
<dbReference type="BioMuta" id="SLAMF7"/>
<dbReference type="DMDM" id="66774034"/>
<dbReference type="CPTAC" id="CPTAC-1763"/>
<dbReference type="MassIVE" id="Q9NQ25"/>
<dbReference type="PaxDb" id="9606-ENSP00000357022"/>
<dbReference type="PeptideAtlas" id="Q9NQ25"/>
<dbReference type="ProteomicsDB" id="1858"/>
<dbReference type="ProteomicsDB" id="4815"/>
<dbReference type="ProteomicsDB" id="4826"/>
<dbReference type="ProteomicsDB" id="5326"/>
<dbReference type="ProteomicsDB" id="82055">
    <molecule id="Q9NQ25-1"/>
</dbReference>
<dbReference type="ProteomicsDB" id="82056">
    <molecule id="Q9NQ25-2"/>
</dbReference>
<dbReference type="ProteomicsDB" id="82057">
    <molecule id="Q9NQ25-3"/>
</dbReference>
<dbReference type="TopDownProteomics" id="Q9NQ25-2">
    <molecule id="Q9NQ25-2"/>
</dbReference>
<dbReference type="ABCD" id="Q9NQ25">
    <property type="antibodies" value="2 sequenced antibodies"/>
</dbReference>
<dbReference type="Antibodypedia" id="4220">
    <property type="antibodies" value="613 antibodies from 35 providers"/>
</dbReference>
<dbReference type="CPTC" id="Q9NQ25">
    <property type="antibodies" value="1 antibody"/>
</dbReference>
<dbReference type="DNASU" id="57823"/>
<dbReference type="Ensembl" id="ENST00000359331.8">
    <molecule id="Q9NQ25-5"/>
    <property type="protein sequence ID" value="ENSP00000352281.4"/>
    <property type="gene ID" value="ENSG00000026751.17"/>
</dbReference>
<dbReference type="Ensembl" id="ENST00000368042.7">
    <molecule id="Q9NQ25-2"/>
    <property type="protein sequence ID" value="ENSP00000357021.3"/>
    <property type="gene ID" value="ENSG00000026751.17"/>
</dbReference>
<dbReference type="Ensembl" id="ENST00000368043.8">
    <molecule id="Q9NQ25-1"/>
    <property type="protein sequence ID" value="ENSP00000357022.3"/>
    <property type="gene ID" value="ENSG00000026751.17"/>
</dbReference>
<dbReference type="Ensembl" id="ENST00000441662.6">
    <molecule id="Q9NQ25-6"/>
    <property type="protein sequence ID" value="ENSP00000405605.2"/>
    <property type="gene ID" value="ENSG00000026751.17"/>
</dbReference>
<dbReference type="Ensembl" id="ENST00000444090.6">
    <molecule id="Q9NQ25-4"/>
    <property type="protein sequence ID" value="ENSP00000416592.2"/>
    <property type="gene ID" value="ENSG00000026751.17"/>
</dbReference>
<dbReference type="Ensembl" id="ENST00000458602.6">
    <molecule id="Q9NQ25-7"/>
    <property type="protein sequence ID" value="ENSP00000409965.2"/>
    <property type="gene ID" value="ENSG00000026751.17"/>
</dbReference>
<dbReference type="GeneID" id="57823"/>
<dbReference type="KEGG" id="hsa:57823"/>
<dbReference type="MANE-Select" id="ENST00000368043.8">
    <property type="protein sequence ID" value="ENSP00000357022.3"/>
    <property type="RefSeq nucleotide sequence ID" value="NM_021181.5"/>
    <property type="RefSeq protein sequence ID" value="NP_067004.3"/>
</dbReference>
<dbReference type="UCSC" id="uc001fwq.5">
    <molecule id="Q9NQ25-1"/>
    <property type="organism name" value="human"/>
</dbReference>
<dbReference type="AGR" id="HGNC:21394"/>
<dbReference type="CTD" id="57823"/>
<dbReference type="DisGeNET" id="57823"/>
<dbReference type="GeneCards" id="SLAMF7"/>
<dbReference type="HGNC" id="HGNC:21394">
    <property type="gene designation" value="SLAMF7"/>
</dbReference>
<dbReference type="HPA" id="ENSG00000026751">
    <property type="expression patterns" value="Tissue enhanced (intestine, lymphoid tissue, stomach)"/>
</dbReference>
<dbReference type="MIM" id="606625">
    <property type="type" value="gene"/>
</dbReference>
<dbReference type="neXtProt" id="NX_Q9NQ25"/>
<dbReference type="OpenTargets" id="ENSG00000026751"/>
<dbReference type="PharmGKB" id="PA134977110"/>
<dbReference type="VEuPathDB" id="HostDB:ENSG00000026751"/>
<dbReference type="eggNOG" id="ENOG502SRN2">
    <property type="taxonomic scope" value="Eukaryota"/>
</dbReference>
<dbReference type="GeneTree" id="ENSGT01030000234540"/>
<dbReference type="HOGENOM" id="CLU_069386_1_1_1"/>
<dbReference type="InParanoid" id="Q9NQ25"/>
<dbReference type="OMA" id="DSIVWIF"/>
<dbReference type="OrthoDB" id="8963224at2759"/>
<dbReference type="PAN-GO" id="Q9NQ25">
    <property type="GO annotations" value="2 GO annotations based on evolutionary models"/>
</dbReference>
<dbReference type="PhylomeDB" id="Q9NQ25"/>
<dbReference type="TreeFam" id="TF334964"/>
<dbReference type="PathwayCommons" id="Q9NQ25"/>
<dbReference type="Reactome" id="R-HSA-198933">
    <property type="pathway name" value="Immunoregulatory interactions between a Lymphoid and a non-Lymphoid cell"/>
</dbReference>
<dbReference type="SignaLink" id="Q9NQ25"/>
<dbReference type="BioGRID-ORCS" id="57823">
    <property type="hits" value="6 hits in 1153 CRISPR screens"/>
</dbReference>
<dbReference type="GeneWiki" id="SLAMF7"/>
<dbReference type="GenomeRNAi" id="57823"/>
<dbReference type="Pharos" id="Q9NQ25">
    <property type="development level" value="Tclin"/>
</dbReference>
<dbReference type="PRO" id="PR:Q9NQ25"/>
<dbReference type="Proteomes" id="UP000005640">
    <property type="component" value="Chromosome 1"/>
</dbReference>
<dbReference type="RNAct" id="Q9NQ25">
    <property type="molecule type" value="protein"/>
</dbReference>
<dbReference type="Bgee" id="ENSG00000026751">
    <property type="expression patterns" value="Expressed in granulocyte and 147 other cell types or tissues"/>
</dbReference>
<dbReference type="ExpressionAtlas" id="Q9NQ25">
    <property type="expression patterns" value="baseline and differential"/>
</dbReference>
<dbReference type="GO" id="GO:0009897">
    <property type="term" value="C:external side of plasma membrane"/>
    <property type="evidence" value="ECO:0000318"/>
    <property type="project" value="GO_Central"/>
</dbReference>
<dbReference type="GO" id="GO:0005886">
    <property type="term" value="C:plasma membrane"/>
    <property type="evidence" value="ECO:0000304"/>
    <property type="project" value="Reactome"/>
</dbReference>
<dbReference type="GO" id="GO:0042802">
    <property type="term" value="F:identical protein binding"/>
    <property type="evidence" value="ECO:0000353"/>
    <property type="project" value="IntAct"/>
</dbReference>
<dbReference type="GO" id="GO:0002250">
    <property type="term" value="P:adaptive immune response"/>
    <property type="evidence" value="ECO:0007669"/>
    <property type="project" value="UniProtKB-KW"/>
</dbReference>
<dbReference type="GO" id="GO:0007155">
    <property type="term" value="P:cell adhesion"/>
    <property type="evidence" value="ECO:0000303"/>
    <property type="project" value="UniProtKB"/>
</dbReference>
<dbReference type="GO" id="GO:0006955">
    <property type="term" value="P:immune response"/>
    <property type="evidence" value="ECO:0000318"/>
    <property type="project" value="GO_Central"/>
</dbReference>
<dbReference type="GO" id="GO:0030101">
    <property type="term" value="P:natural killer cell activation"/>
    <property type="evidence" value="ECO:0000303"/>
    <property type="project" value="UniProtKB"/>
</dbReference>
<dbReference type="GO" id="GO:0042267">
    <property type="term" value="P:natural killer cell mediated cytotoxicity"/>
    <property type="evidence" value="ECO:0000303"/>
    <property type="project" value="UniProtKB"/>
</dbReference>
<dbReference type="GO" id="GO:0042110">
    <property type="term" value="P:T cell activation"/>
    <property type="evidence" value="ECO:0000318"/>
    <property type="project" value="GO_Central"/>
</dbReference>
<dbReference type="FunFam" id="2.60.40.10:FF:000470">
    <property type="entry name" value="SLAM family member 7"/>
    <property type="match status" value="1"/>
</dbReference>
<dbReference type="FunFam" id="2.60.40.10:FF:000820">
    <property type="entry name" value="SLAM family member 7"/>
    <property type="match status" value="1"/>
</dbReference>
<dbReference type="Gene3D" id="2.60.40.10">
    <property type="entry name" value="Immunoglobulins"/>
    <property type="match status" value="2"/>
</dbReference>
<dbReference type="InterPro" id="IPR015631">
    <property type="entry name" value="CD2/SLAM_rcpt"/>
</dbReference>
<dbReference type="InterPro" id="IPR007110">
    <property type="entry name" value="Ig-like_dom"/>
</dbReference>
<dbReference type="InterPro" id="IPR036179">
    <property type="entry name" value="Ig-like_dom_sf"/>
</dbReference>
<dbReference type="InterPro" id="IPR013783">
    <property type="entry name" value="Ig-like_fold"/>
</dbReference>
<dbReference type="InterPro" id="IPR013106">
    <property type="entry name" value="Ig_V-set"/>
</dbReference>
<dbReference type="PANTHER" id="PTHR12080">
    <property type="entry name" value="SIGNALING LYMPHOCYTIC ACTIVATION MOLECULE"/>
    <property type="match status" value="1"/>
</dbReference>
<dbReference type="PANTHER" id="PTHR12080:SF46">
    <property type="entry name" value="SLAM FAMILY MEMBER 7"/>
    <property type="match status" value="1"/>
</dbReference>
<dbReference type="Pfam" id="PF07686">
    <property type="entry name" value="V-set"/>
    <property type="match status" value="1"/>
</dbReference>
<dbReference type="SUPFAM" id="SSF48726">
    <property type="entry name" value="Immunoglobulin"/>
    <property type="match status" value="2"/>
</dbReference>
<dbReference type="PROSITE" id="PS50835">
    <property type="entry name" value="IG_LIKE"/>
    <property type="match status" value="1"/>
</dbReference>
<reference key="1">
    <citation type="journal article" date="2001" name="Immunogenetics">
        <title>Molecular cloning of CS1, a novel human natural killer cell receptor belonging to the CD2 subset of the immunoglobulin superfamily.</title>
        <authorList>
            <person name="Boles K.S."/>
            <person name="Mathew P.A."/>
        </authorList>
    </citation>
    <scope>NUCLEOTIDE SEQUENCE [MRNA] (ISOFORM 1)</scope>
    <scope>TISSUE SPECIFICITY</scope>
</reference>
<reference key="2">
    <citation type="journal article" date="2001" name="J. Immunol.">
        <title>Activation of NK cell-mediated cytotoxicity by a SAP-independent receptor of the CD2 family.</title>
        <authorList>
            <person name="Bouchon A."/>
            <person name="Cella M."/>
            <person name="Grierson H.L."/>
            <person name="Cohen J.I."/>
            <person name="Colonna M."/>
        </authorList>
    </citation>
    <scope>NUCLEOTIDE SEQUENCE [MRNA] (ISOFORM 1)</scope>
    <scope>FUNCTION</scope>
    <scope>TISSUE SPECIFICITY</scope>
</reference>
<reference key="3">
    <citation type="journal article" date="2002" name="Biochem. J.">
        <title>A novel immunoglobulin superfamily receptor (19A) related to CD2 is expressed on activated lymphocytes and promotes homotypic B-cell adhesion.</title>
        <authorList>
            <person name="Murphy J.J."/>
            <person name="Hobby P."/>
            <person name="Vilarino-Varela J."/>
            <person name="Bishop B."/>
            <person name="Iordanidou P."/>
            <person name="Sutton B.J."/>
            <person name="Norton J.D."/>
        </authorList>
    </citation>
    <scope>NUCLEOTIDE SEQUENCE [MRNA] (ISOFORMS 1 AND 3)</scope>
    <scope>FUNCTION</scope>
    <scope>TISSUE SPECIFICITY</scope>
</reference>
<reference key="4">
    <citation type="submission" date="1999-05" db="EMBL/GenBank/DDBJ databases">
        <title>Homo sapiens mRNA for FOAP-12 protein, complete cds.</title>
        <authorList>
            <person name="Fujii Y."/>
            <person name="Takayama K."/>
            <person name="Tsuritani K."/>
            <person name="Yajima Y."/>
            <person name="Amemiya T."/>
            <person name="Ukai Y."/>
            <person name="Naito K."/>
            <person name="Kawaguchi A."/>
        </authorList>
    </citation>
    <scope>NUCLEOTIDE SEQUENCE [MRNA] (ISOFORM 1)</scope>
    <source>
        <tissue>Macrophage</tissue>
    </source>
</reference>
<reference key="5">
    <citation type="journal article" date="2003" name="Genome Res.">
        <title>The secreted protein discovery initiative (SPDI), a large-scale effort to identify novel human secreted and transmembrane proteins: a bioinformatics assessment.</title>
        <authorList>
            <person name="Clark H.F."/>
            <person name="Gurney A.L."/>
            <person name="Abaya E."/>
            <person name="Baker K."/>
            <person name="Baldwin D.T."/>
            <person name="Brush J."/>
            <person name="Chen J."/>
            <person name="Chow B."/>
            <person name="Chui C."/>
            <person name="Crowley C."/>
            <person name="Currell B."/>
            <person name="Deuel B."/>
            <person name="Dowd P."/>
            <person name="Eaton D."/>
            <person name="Foster J.S."/>
            <person name="Grimaldi C."/>
            <person name="Gu Q."/>
            <person name="Hass P.E."/>
            <person name="Heldens S."/>
            <person name="Huang A."/>
            <person name="Kim H.S."/>
            <person name="Klimowski L."/>
            <person name="Jin Y."/>
            <person name="Johnson S."/>
            <person name="Lee J."/>
            <person name="Lewis L."/>
            <person name="Liao D."/>
            <person name="Mark M.R."/>
            <person name="Robbie E."/>
            <person name="Sanchez C."/>
            <person name="Schoenfeld J."/>
            <person name="Seshagiri S."/>
            <person name="Simmons L."/>
            <person name="Singh J."/>
            <person name="Smith V."/>
            <person name="Stinson J."/>
            <person name="Vagts A."/>
            <person name="Vandlen R.L."/>
            <person name="Watanabe C."/>
            <person name="Wieand D."/>
            <person name="Woods K."/>
            <person name="Xie M.-H."/>
            <person name="Yansura D.G."/>
            <person name="Yi S."/>
            <person name="Yu G."/>
            <person name="Yuan J."/>
            <person name="Zhang M."/>
            <person name="Zhang Z."/>
            <person name="Goddard A.D."/>
            <person name="Wood W.I."/>
            <person name="Godowski P.J."/>
            <person name="Gray A.M."/>
        </authorList>
    </citation>
    <scope>NUCLEOTIDE SEQUENCE [LARGE SCALE MRNA]</scope>
</reference>
<reference key="6">
    <citation type="journal article" date="2004" name="Nat. Genet.">
        <title>Complete sequencing and characterization of 21,243 full-length human cDNAs.</title>
        <authorList>
            <person name="Ota T."/>
            <person name="Suzuki Y."/>
            <person name="Nishikawa T."/>
            <person name="Otsuki T."/>
            <person name="Sugiyama T."/>
            <person name="Irie R."/>
            <person name="Wakamatsu A."/>
            <person name="Hayashi K."/>
            <person name="Sato H."/>
            <person name="Nagai K."/>
            <person name="Kimura K."/>
            <person name="Makita H."/>
            <person name="Sekine M."/>
            <person name="Obayashi M."/>
            <person name="Nishi T."/>
            <person name="Shibahara T."/>
            <person name="Tanaka T."/>
            <person name="Ishii S."/>
            <person name="Yamamoto J."/>
            <person name="Saito K."/>
            <person name="Kawai Y."/>
            <person name="Isono Y."/>
            <person name="Nakamura Y."/>
            <person name="Nagahari K."/>
            <person name="Murakami K."/>
            <person name="Yasuda T."/>
            <person name="Iwayanagi T."/>
            <person name="Wagatsuma M."/>
            <person name="Shiratori A."/>
            <person name="Sudo H."/>
            <person name="Hosoiri T."/>
            <person name="Kaku Y."/>
            <person name="Kodaira H."/>
            <person name="Kondo H."/>
            <person name="Sugawara M."/>
            <person name="Takahashi M."/>
            <person name="Kanda K."/>
            <person name="Yokoi T."/>
            <person name="Furuya T."/>
            <person name="Kikkawa E."/>
            <person name="Omura Y."/>
            <person name="Abe K."/>
            <person name="Kamihara K."/>
            <person name="Katsuta N."/>
            <person name="Sato K."/>
            <person name="Tanikawa M."/>
            <person name="Yamazaki M."/>
            <person name="Ninomiya K."/>
            <person name="Ishibashi T."/>
            <person name="Yamashita H."/>
            <person name="Murakawa K."/>
            <person name="Fujimori K."/>
            <person name="Tanai H."/>
            <person name="Kimata M."/>
            <person name="Watanabe M."/>
            <person name="Hiraoka S."/>
            <person name="Chiba Y."/>
            <person name="Ishida S."/>
            <person name="Ono Y."/>
            <person name="Takiguchi S."/>
            <person name="Watanabe S."/>
            <person name="Yosida M."/>
            <person name="Hotuta T."/>
            <person name="Kusano J."/>
            <person name="Kanehori K."/>
            <person name="Takahashi-Fujii A."/>
            <person name="Hara H."/>
            <person name="Tanase T.-O."/>
            <person name="Nomura Y."/>
            <person name="Togiya S."/>
            <person name="Komai F."/>
            <person name="Hara R."/>
            <person name="Takeuchi K."/>
            <person name="Arita M."/>
            <person name="Imose N."/>
            <person name="Musashino K."/>
            <person name="Yuuki H."/>
            <person name="Oshima A."/>
            <person name="Sasaki N."/>
            <person name="Aotsuka S."/>
            <person name="Yoshikawa Y."/>
            <person name="Matsunawa H."/>
            <person name="Ichihara T."/>
            <person name="Shiohata N."/>
            <person name="Sano S."/>
            <person name="Moriya S."/>
            <person name="Momiyama H."/>
            <person name="Satoh N."/>
            <person name="Takami S."/>
            <person name="Terashima Y."/>
            <person name="Suzuki O."/>
            <person name="Nakagawa S."/>
            <person name="Senoh A."/>
            <person name="Mizoguchi H."/>
            <person name="Goto Y."/>
            <person name="Shimizu F."/>
            <person name="Wakebe H."/>
            <person name="Hishigaki H."/>
            <person name="Watanabe T."/>
            <person name="Sugiyama A."/>
            <person name="Takemoto M."/>
            <person name="Kawakami B."/>
            <person name="Yamazaki M."/>
            <person name="Watanabe K."/>
            <person name="Kumagai A."/>
            <person name="Itakura S."/>
            <person name="Fukuzumi Y."/>
            <person name="Fujimori Y."/>
            <person name="Komiyama M."/>
            <person name="Tashiro H."/>
            <person name="Tanigami A."/>
            <person name="Fujiwara T."/>
            <person name="Ono T."/>
            <person name="Yamada K."/>
            <person name="Fujii Y."/>
            <person name="Ozaki K."/>
            <person name="Hirao M."/>
            <person name="Ohmori Y."/>
            <person name="Kawabata A."/>
            <person name="Hikiji T."/>
            <person name="Kobatake N."/>
            <person name="Inagaki H."/>
            <person name="Ikema Y."/>
            <person name="Okamoto S."/>
            <person name="Okitani R."/>
            <person name="Kawakami T."/>
            <person name="Noguchi S."/>
            <person name="Itoh T."/>
            <person name="Shigeta K."/>
            <person name="Senba T."/>
            <person name="Matsumura K."/>
            <person name="Nakajima Y."/>
            <person name="Mizuno T."/>
            <person name="Morinaga M."/>
            <person name="Sasaki M."/>
            <person name="Togashi T."/>
            <person name="Oyama M."/>
            <person name="Hata H."/>
            <person name="Watanabe M."/>
            <person name="Komatsu T."/>
            <person name="Mizushima-Sugano J."/>
            <person name="Satoh T."/>
            <person name="Shirai Y."/>
            <person name="Takahashi Y."/>
            <person name="Nakagawa K."/>
            <person name="Okumura K."/>
            <person name="Nagase T."/>
            <person name="Nomura N."/>
            <person name="Kikuchi H."/>
            <person name="Masuho Y."/>
            <person name="Yamashita R."/>
            <person name="Nakai K."/>
            <person name="Yada T."/>
            <person name="Nakamura Y."/>
            <person name="Ohara O."/>
            <person name="Isogai T."/>
            <person name="Sugano S."/>
        </authorList>
    </citation>
    <scope>NUCLEOTIDE SEQUENCE [LARGE SCALE MRNA] (ISOFORMS 4; 6 AND 7)</scope>
    <source>
        <tissue>Lung</tissue>
        <tissue>Synovium</tissue>
    </source>
</reference>
<reference key="7">
    <citation type="journal article" date="2007" name="BMC Genomics">
        <title>The full-ORF clone resource of the German cDNA consortium.</title>
        <authorList>
            <person name="Bechtel S."/>
            <person name="Rosenfelder H."/>
            <person name="Duda A."/>
            <person name="Schmidt C.P."/>
            <person name="Ernst U."/>
            <person name="Wellenreuther R."/>
            <person name="Mehrle A."/>
            <person name="Schuster C."/>
            <person name="Bahr A."/>
            <person name="Bloecker H."/>
            <person name="Heubner D."/>
            <person name="Hoerlein A."/>
            <person name="Michel G."/>
            <person name="Wedler H."/>
            <person name="Koehrer K."/>
            <person name="Ottenwaelder B."/>
            <person name="Poustka A."/>
            <person name="Wiemann S."/>
            <person name="Schupp I."/>
        </authorList>
    </citation>
    <scope>NUCLEOTIDE SEQUENCE [LARGE SCALE MRNA] (ISOFORM 2)</scope>
    <source>
        <tissue>Lymph node</tissue>
    </source>
</reference>
<reference key="8">
    <citation type="journal article" date="2006" name="Nature">
        <title>The DNA sequence and biological annotation of human chromosome 1.</title>
        <authorList>
            <person name="Gregory S.G."/>
            <person name="Barlow K.F."/>
            <person name="McLay K.E."/>
            <person name="Kaul R."/>
            <person name="Swarbreck D."/>
            <person name="Dunham A."/>
            <person name="Scott C.E."/>
            <person name="Howe K.L."/>
            <person name="Woodfine K."/>
            <person name="Spencer C.C.A."/>
            <person name="Jones M.C."/>
            <person name="Gillson C."/>
            <person name="Searle S."/>
            <person name="Zhou Y."/>
            <person name="Kokocinski F."/>
            <person name="McDonald L."/>
            <person name="Evans R."/>
            <person name="Phillips K."/>
            <person name="Atkinson A."/>
            <person name="Cooper R."/>
            <person name="Jones C."/>
            <person name="Hall R.E."/>
            <person name="Andrews T.D."/>
            <person name="Lloyd C."/>
            <person name="Ainscough R."/>
            <person name="Almeida J.P."/>
            <person name="Ambrose K.D."/>
            <person name="Anderson F."/>
            <person name="Andrew R.W."/>
            <person name="Ashwell R.I.S."/>
            <person name="Aubin K."/>
            <person name="Babbage A.K."/>
            <person name="Bagguley C.L."/>
            <person name="Bailey J."/>
            <person name="Beasley H."/>
            <person name="Bethel G."/>
            <person name="Bird C.P."/>
            <person name="Bray-Allen S."/>
            <person name="Brown J.Y."/>
            <person name="Brown A.J."/>
            <person name="Buckley D."/>
            <person name="Burton J."/>
            <person name="Bye J."/>
            <person name="Carder C."/>
            <person name="Chapman J.C."/>
            <person name="Clark S.Y."/>
            <person name="Clarke G."/>
            <person name="Clee C."/>
            <person name="Cobley V."/>
            <person name="Collier R.E."/>
            <person name="Corby N."/>
            <person name="Coville G.J."/>
            <person name="Davies J."/>
            <person name="Deadman R."/>
            <person name="Dunn M."/>
            <person name="Earthrowl M."/>
            <person name="Ellington A.G."/>
            <person name="Errington H."/>
            <person name="Frankish A."/>
            <person name="Frankland J."/>
            <person name="French L."/>
            <person name="Garner P."/>
            <person name="Garnett J."/>
            <person name="Gay L."/>
            <person name="Ghori M.R.J."/>
            <person name="Gibson R."/>
            <person name="Gilby L.M."/>
            <person name="Gillett W."/>
            <person name="Glithero R.J."/>
            <person name="Grafham D.V."/>
            <person name="Griffiths C."/>
            <person name="Griffiths-Jones S."/>
            <person name="Grocock R."/>
            <person name="Hammond S."/>
            <person name="Harrison E.S.I."/>
            <person name="Hart E."/>
            <person name="Haugen E."/>
            <person name="Heath P.D."/>
            <person name="Holmes S."/>
            <person name="Holt K."/>
            <person name="Howden P.J."/>
            <person name="Hunt A.R."/>
            <person name="Hunt S.E."/>
            <person name="Hunter G."/>
            <person name="Isherwood J."/>
            <person name="James R."/>
            <person name="Johnson C."/>
            <person name="Johnson D."/>
            <person name="Joy A."/>
            <person name="Kay M."/>
            <person name="Kershaw J.K."/>
            <person name="Kibukawa M."/>
            <person name="Kimberley A.M."/>
            <person name="King A."/>
            <person name="Knights A.J."/>
            <person name="Lad H."/>
            <person name="Laird G."/>
            <person name="Lawlor S."/>
            <person name="Leongamornlert D.A."/>
            <person name="Lloyd D.M."/>
            <person name="Loveland J."/>
            <person name="Lovell J."/>
            <person name="Lush M.J."/>
            <person name="Lyne R."/>
            <person name="Martin S."/>
            <person name="Mashreghi-Mohammadi M."/>
            <person name="Matthews L."/>
            <person name="Matthews N.S.W."/>
            <person name="McLaren S."/>
            <person name="Milne S."/>
            <person name="Mistry S."/>
            <person name="Moore M.J.F."/>
            <person name="Nickerson T."/>
            <person name="O'Dell C.N."/>
            <person name="Oliver K."/>
            <person name="Palmeiri A."/>
            <person name="Palmer S.A."/>
            <person name="Parker A."/>
            <person name="Patel D."/>
            <person name="Pearce A.V."/>
            <person name="Peck A.I."/>
            <person name="Pelan S."/>
            <person name="Phelps K."/>
            <person name="Phillimore B.J."/>
            <person name="Plumb R."/>
            <person name="Rajan J."/>
            <person name="Raymond C."/>
            <person name="Rouse G."/>
            <person name="Saenphimmachak C."/>
            <person name="Sehra H.K."/>
            <person name="Sheridan E."/>
            <person name="Shownkeen R."/>
            <person name="Sims S."/>
            <person name="Skuce C.D."/>
            <person name="Smith M."/>
            <person name="Steward C."/>
            <person name="Subramanian S."/>
            <person name="Sycamore N."/>
            <person name="Tracey A."/>
            <person name="Tromans A."/>
            <person name="Van Helmond Z."/>
            <person name="Wall M."/>
            <person name="Wallis J.M."/>
            <person name="White S."/>
            <person name="Whitehead S.L."/>
            <person name="Wilkinson J.E."/>
            <person name="Willey D.L."/>
            <person name="Williams H."/>
            <person name="Wilming L."/>
            <person name="Wray P.W."/>
            <person name="Wu Z."/>
            <person name="Coulson A."/>
            <person name="Vaudin M."/>
            <person name="Sulston J.E."/>
            <person name="Durbin R.M."/>
            <person name="Hubbard T."/>
            <person name="Wooster R."/>
            <person name="Dunham I."/>
            <person name="Carter N.P."/>
            <person name="McVean G."/>
            <person name="Ross M.T."/>
            <person name="Harrow J."/>
            <person name="Olson M.V."/>
            <person name="Beck S."/>
            <person name="Rogers J."/>
            <person name="Bentley D.R."/>
        </authorList>
    </citation>
    <scope>NUCLEOTIDE SEQUENCE [LARGE SCALE GENOMIC DNA]</scope>
</reference>
<reference key="9">
    <citation type="submission" date="2005-09" db="EMBL/GenBank/DDBJ databases">
        <authorList>
            <person name="Mural R.J."/>
            <person name="Istrail S."/>
            <person name="Sutton G."/>
            <person name="Florea L."/>
            <person name="Halpern A.L."/>
            <person name="Mobarry C.M."/>
            <person name="Lippert R."/>
            <person name="Walenz B."/>
            <person name="Shatkay H."/>
            <person name="Dew I."/>
            <person name="Miller J.R."/>
            <person name="Flanigan M.J."/>
            <person name="Edwards N.J."/>
            <person name="Bolanos R."/>
            <person name="Fasulo D."/>
            <person name="Halldorsson B.V."/>
            <person name="Hannenhalli S."/>
            <person name="Turner R."/>
            <person name="Yooseph S."/>
            <person name="Lu F."/>
            <person name="Nusskern D.R."/>
            <person name="Shue B.C."/>
            <person name="Zheng X.H."/>
            <person name="Zhong F."/>
            <person name="Delcher A.L."/>
            <person name="Huson D.H."/>
            <person name="Kravitz S.A."/>
            <person name="Mouchard L."/>
            <person name="Reinert K."/>
            <person name="Remington K.A."/>
            <person name="Clark A.G."/>
            <person name="Waterman M.S."/>
            <person name="Eichler E.E."/>
            <person name="Adams M.D."/>
            <person name="Hunkapiller M.W."/>
            <person name="Myers E.W."/>
            <person name="Venter J.C."/>
        </authorList>
    </citation>
    <scope>NUCLEOTIDE SEQUENCE [LARGE SCALE GENOMIC DNA]</scope>
</reference>
<reference key="10">
    <citation type="journal article" date="2004" name="Genome Res.">
        <title>The status, quality, and expansion of the NIH full-length cDNA project: the Mammalian Gene Collection (MGC).</title>
        <authorList>
            <consortium name="The MGC Project Team"/>
        </authorList>
    </citation>
    <scope>NUCLEOTIDE SEQUENCE [LARGE SCALE MRNA] (ISOFORM 3)</scope>
    <source>
        <tissue>Fetal lung</tissue>
        <tissue>Fetal spleen</tissue>
    </source>
</reference>
<reference key="11">
    <citation type="journal article" date="2004" name="Protein Sci.">
        <title>Signal peptide prediction based on analysis of experimentally verified cleavage sites.</title>
        <authorList>
            <person name="Zhang Z."/>
            <person name="Henzel W.J."/>
        </authorList>
    </citation>
    <scope>PROTEIN SEQUENCE OF 23-37</scope>
</reference>
<reference key="12">
    <citation type="journal article" date="2004" name="Eur. J. Immunol.">
        <title>Molecular and functional characterization of a CS1 (CRACC) splice variant expressed in human NK cells that does not contain immunoreceptor tyrosine-based switch motifs.</title>
        <authorList>
            <person name="Lee J.K."/>
            <person name="Boles K.S."/>
            <person name="Mathew P.A."/>
        </authorList>
    </citation>
    <scope>ALTERNATIVE SPLICING (ISOFORM 3)</scope>
</reference>
<reference key="13">
    <citation type="journal article" date="2002" name="Immunogenetics">
        <title>Mouse novel Ly9: a new member of the expanding CD150 (SLAM) family of leukocyte cell-surface receptors.</title>
        <authorList>
            <person name="Tovar V."/>
            <person name="Del Valle J."/>
            <person name="Zapater N."/>
            <person name="Martin M."/>
            <person name="Romero X."/>
            <person name="Pizcueta P."/>
            <person name="Bosch J."/>
            <person name="Terhorst C."/>
            <person name="Engel P."/>
        </authorList>
    </citation>
    <scope>TISSUE SPECIFICITY</scope>
    <scope>INTERACTION WITH SH2D1A</scope>
</reference>
<reference key="14">
    <citation type="journal article" date="2005" name="J. Immunol.">
        <title>The cytotoxicity receptor CRACC (CS-1) recruits EAT-2 and activates the PI3K and phospholipase Cgamma signaling pathways in human NK cells.</title>
        <authorList>
            <person name="Tassi I."/>
            <person name="Colonna M."/>
        </authorList>
    </citation>
    <scope>FUNCTION</scope>
    <scope>INTERACTION WITH SH2D1B</scope>
</reference>
<reference key="15">
    <citation type="journal article" date="2013" name="Inflamm. Res.">
        <title>CS1 (SLAMF7) inhibits production of proinflammatory cytokines by activated monocytes.</title>
        <authorList>
            <person name="Kim J.R."/>
            <person name="Horton N.C."/>
            <person name="Mathew S.O."/>
            <person name="Mathew P.A."/>
        </authorList>
    </citation>
    <scope>FUNCTION</scope>
    <scope>TISSUE SPECIFICITY</scope>
</reference>
<reference key="16">
    <citation type="journal article" date="2013" name="J. Immunol.">
        <title>Systemic lupus erythematosus immune complexes increase the expression of SLAM family members CD319 (CRACC) and CD229 (LY-9) on plasmacytoid dendritic cells and CD319 on CD56(dim) NK cells.</title>
        <authorList>
            <person name="Hagberg N."/>
            <person name="Theorell J."/>
            <person name="Schlums H."/>
            <person name="Eloranta M.L."/>
            <person name="Bryceson Y.T."/>
            <person name="Roennblom L."/>
        </authorList>
    </citation>
    <scope>INVOLVEMENT IN SYSTEMIC LUPUS ERYTHEMATOSUS</scope>
</reference>
<organism>
    <name type="scientific">Homo sapiens</name>
    <name type="common">Human</name>
    <dbReference type="NCBI Taxonomy" id="9606"/>
    <lineage>
        <taxon>Eukaryota</taxon>
        <taxon>Metazoa</taxon>
        <taxon>Chordata</taxon>
        <taxon>Craniata</taxon>
        <taxon>Vertebrata</taxon>
        <taxon>Euteleostomi</taxon>
        <taxon>Mammalia</taxon>
        <taxon>Eutheria</taxon>
        <taxon>Euarchontoglires</taxon>
        <taxon>Primates</taxon>
        <taxon>Haplorrhini</taxon>
        <taxon>Catarrhini</taxon>
        <taxon>Hominidae</taxon>
        <taxon>Homo</taxon>
    </lineage>
</organism>
<accession>Q9NQ25</accession>
<accession>A8K3U1</accession>
<accession>B4DPU4</accession>
<accession>B4DPY3</accession>
<accession>B4DWA3</accession>
<accession>Q8N6Y8</accession>
<accession>Q8ND32</accession>
<accession>Q9NY08</accession>
<accession>Q9NY23</accession>
<sequence>MAGSPTCLTLIYILWQLTGSAASGPVKELVGSVGGAVTFPLKSKVKQVDSIVWTFNTTPLVTIQPEGGTIIVTQNRNRERVDFPDGGYSLKLSKLKKNDSGIYYVGIYSSSLQQPSTQEYVLHVYEHLSKPKVTMGLQSNKNGTCVTNLTCCMEHGEEDVIYTWKALGQAANESHNGSILPISWRWGESDMTFICVARNPVSRNFSSPILARKLCEGAADDPDSSMVLLCLLLVPLLLSLFVLGLFLWFLKRERQEEYIEEKKRVDICRETPNICPHSGENTEYDTIPHTNRTILKEDPANTVYSTVEIPKKMENPHSLLTMPDTPRLFAYENVI</sequence>